<proteinExistence type="evidence at transcript level"/>
<keyword id="KW-0090">Biological rhythms</keyword>
<keyword id="KW-0539">Nucleus</keyword>
<keyword id="KW-1185">Reference proteome</keyword>
<sequence length="114" mass="12663">MEGDVLSGFGDRHNMDGKLLQSFQKSFVDVQDILDQNRLLINEINQNHESKQPDNLGRNVGLIKELNNNIRRVASLYGDLSHSFARSVDASSEGESSGTLKSDGKANQKRFRSG</sequence>
<comment type="function">
    <text evidence="1">Component of the central CCA1/LHY-TOC1 feedback loop in the circadian clock that promotes clock accuracy and is required for sustained rhythms in the absence of daily light/dark cycles.</text>
</comment>
<comment type="subunit">
    <text evidence="1">Homodimer.</text>
</comment>
<comment type="subcellular location">
    <subcellularLocation>
        <location evidence="1">Nucleus</location>
    </subcellularLocation>
</comment>
<comment type="induction">
    <text evidence="3">Follows a light-dependent circadian-regulated expression with a small peak in the evening, about 12 hours after dawn.</text>
</comment>
<comment type="similarity">
    <text evidence="4">Belongs to the EARLY FLOWERING 4 family.</text>
</comment>
<comment type="sequence caution" evidence="4">
    <conflict type="erroneous gene model prediction">
        <sequence resource="EMBL-CDS" id="AAF79463"/>
    </conflict>
</comment>
<comment type="sequence caution" evidence="4">
    <conflict type="erroneous gene model prediction">
        <sequence resource="EMBL-CDS" id="AAF97300"/>
    </conflict>
</comment>
<gene>
    <name type="primary">EFL4</name>
    <name type="synonym">ELF4-L4</name>
    <name type="ordered locus">At1g17455</name>
    <name type="ORF">F1L3.15</name>
    <name type="ORF">F28G4.6</name>
</gene>
<name>EF4L4_ARATH</name>
<evidence type="ECO:0000250" key="1"/>
<evidence type="ECO:0000256" key="2">
    <source>
        <dbReference type="SAM" id="MobiDB-lite"/>
    </source>
</evidence>
<evidence type="ECO:0000269" key="3">
    <source>
    </source>
</evidence>
<evidence type="ECO:0000305" key="4"/>
<feature type="chain" id="PRO_0000408506" description="Protein ELF4-LIKE 4">
    <location>
        <begin position="1"/>
        <end position="114"/>
    </location>
</feature>
<feature type="region of interest" description="Disordered" evidence="2">
    <location>
        <begin position="87"/>
        <end position="114"/>
    </location>
</feature>
<feature type="compositionally biased region" description="Polar residues" evidence="2">
    <location>
        <begin position="89"/>
        <end position="100"/>
    </location>
</feature>
<accession>Q570U6</accession>
<accession>Q8LEX9</accession>
<accession>Q9LDC8</accession>
<dbReference type="EMBL" id="AC007843">
    <property type="protein sequence ID" value="AAF97300.1"/>
    <property type="status" value="ALT_SEQ"/>
    <property type="molecule type" value="Genomic_DNA"/>
</dbReference>
<dbReference type="EMBL" id="AC022492">
    <property type="protein sequence ID" value="AAF79463.1"/>
    <property type="status" value="ALT_SEQ"/>
    <property type="molecule type" value="Genomic_DNA"/>
</dbReference>
<dbReference type="EMBL" id="CP002684">
    <property type="protein sequence ID" value="AEE29591.1"/>
    <property type="molecule type" value="Genomic_DNA"/>
</dbReference>
<dbReference type="EMBL" id="CP002684">
    <property type="protein sequence ID" value="AEE29592.1"/>
    <property type="molecule type" value="Genomic_DNA"/>
</dbReference>
<dbReference type="EMBL" id="AK220611">
    <property type="protein sequence ID" value="BAD94981.1"/>
    <property type="molecule type" value="mRNA"/>
</dbReference>
<dbReference type="EMBL" id="BT025588">
    <property type="protein sequence ID" value="ABF59006.1"/>
    <property type="molecule type" value="mRNA"/>
</dbReference>
<dbReference type="EMBL" id="AY085165">
    <property type="protein sequence ID" value="AAM61718.1"/>
    <property type="molecule type" value="mRNA"/>
</dbReference>
<dbReference type="RefSeq" id="NP_001154348.1">
    <property type="nucleotide sequence ID" value="NM_001160876.1"/>
</dbReference>
<dbReference type="RefSeq" id="NP_564024.1">
    <property type="nucleotide sequence ID" value="NM_101607.4"/>
</dbReference>
<dbReference type="SMR" id="Q570U6"/>
<dbReference type="BioGRID" id="23558">
    <property type="interactions" value="1"/>
</dbReference>
<dbReference type="FunCoup" id="Q570U6">
    <property type="interactions" value="209"/>
</dbReference>
<dbReference type="STRING" id="3702.Q570U6"/>
<dbReference type="PaxDb" id="3702-AT1G17455.1"/>
<dbReference type="ProteomicsDB" id="247080"/>
<dbReference type="EnsemblPlants" id="AT1G17455.1">
    <property type="protein sequence ID" value="AT1G17455.1"/>
    <property type="gene ID" value="AT1G17455"/>
</dbReference>
<dbReference type="EnsemblPlants" id="AT1G17455.2">
    <property type="protein sequence ID" value="AT1G17455.2"/>
    <property type="gene ID" value="AT1G17455"/>
</dbReference>
<dbReference type="GeneID" id="838318"/>
<dbReference type="Gramene" id="AT1G17455.1">
    <property type="protein sequence ID" value="AT1G17455.1"/>
    <property type="gene ID" value="AT1G17455"/>
</dbReference>
<dbReference type="Gramene" id="AT1G17455.2">
    <property type="protein sequence ID" value="AT1G17455.2"/>
    <property type="gene ID" value="AT1G17455"/>
</dbReference>
<dbReference type="KEGG" id="ath:AT1G17455"/>
<dbReference type="Araport" id="AT1G17455"/>
<dbReference type="TAIR" id="AT1G17455">
    <property type="gene designation" value="ELF4-L4"/>
</dbReference>
<dbReference type="eggNOG" id="ENOG502R34Z">
    <property type="taxonomic scope" value="Eukaryota"/>
</dbReference>
<dbReference type="HOGENOM" id="CLU_119738_1_0_1"/>
<dbReference type="InParanoid" id="Q570U6"/>
<dbReference type="OMA" id="VGMIREL"/>
<dbReference type="OrthoDB" id="1895690at2759"/>
<dbReference type="PhylomeDB" id="Q570U6"/>
<dbReference type="PRO" id="PR:Q570U6"/>
<dbReference type="Proteomes" id="UP000006548">
    <property type="component" value="Chromosome 1"/>
</dbReference>
<dbReference type="ExpressionAtlas" id="Q570U6">
    <property type="expression patterns" value="baseline and differential"/>
</dbReference>
<dbReference type="GO" id="GO:0005634">
    <property type="term" value="C:nucleus"/>
    <property type="evidence" value="ECO:0000250"/>
    <property type="project" value="UniProtKB"/>
</dbReference>
<dbReference type="GO" id="GO:0042803">
    <property type="term" value="F:protein homodimerization activity"/>
    <property type="evidence" value="ECO:0000250"/>
    <property type="project" value="UniProtKB"/>
</dbReference>
<dbReference type="GO" id="GO:0009648">
    <property type="term" value="P:photoperiodism"/>
    <property type="evidence" value="ECO:0000270"/>
    <property type="project" value="UniProtKB"/>
</dbReference>
<dbReference type="GO" id="GO:0042753">
    <property type="term" value="P:positive regulation of circadian rhythm"/>
    <property type="evidence" value="ECO:0007669"/>
    <property type="project" value="InterPro"/>
</dbReference>
<dbReference type="GO" id="GO:0048511">
    <property type="term" value="P:rhythmic process"/>
    <property type="evidence" value="ECO:0007669"/>
    <property type="project" value="UniProtKB-KW"/>
</dbReference>
<dbReference type="InterPro" id="IPR040462">
    <property type="entry name" value="EARLY_FLOWERING_4"/>
</dbReference>
<dbReference type="InterPro" id="IPR009741">
    <property type="entry name" value="EARLY_FLOWERING_4_dom"/>
</dbReference>
<dbReference type="PANTHER" id="PTHR33469">
    <property type="entry name" value="PROTEIN ELF4-LIKE 4"/>
    <property type="match status" value="1"/>
</dbReference>
<dbReference type="PANTHER" id="PTHR33469:SF16">
    <property type="entry name" value="PROTEIN ELF4-LIKE 4"/>
    <property type="match status" value="1"/>
</dbReference>
<dbReference type="Pfam" id="PF07011">
    <property type="entry name" value="Elf4"/>
    <property type="match status" value="1"/>
</dbReference>
<protein>
    <recommendedName>
        <fullName>Protein ELF4-LIKE 4</fullName>
    </recommendedName>
</protein>
<organism>
    <name type="scientific">Arabidopsis thaliana</name>
    <name type="common">Mouse-ear cress</name>
    <dbReference type="NCBI Taxonomy" id="3702"/>
    <lineage>
        <taxon>Eukaryota</taxon>
        <taxon>Viridiplantae</taxon>
        <taxon>Streptophyta</taxon>
        <taxon>Embryophyta</taxon>
        <taxon>Tracheophyta</taxon>
        <taxon>Spermatophyta</taxon>
        <taxon>Magnoliopsida</taxon>
        <taxon>eudicotyledons</taxon>
        <taxon>Gunneridae</taxon>
        <taxon>Pentapetalae</taxon>
        <taxon>rosids</taxon>
        <taxon>malvids</taxon>
        <taxon>Brassicales</taxon>
        <taxon>Brassicaceae</taxon>
        <taxon>Camelineae</taxon>
        <taxon>Arabidopsis</taxon>
    </lineage>
</organism>
<reference key="1">
    <citation type="journal article" date="2000" name="Nature">
        <title>Sequence and analysis of chromosome 1 of the plant Arabidopsis thaliana.</title>
        <authorList>
            <person name="Theologis A."/>
            <person name="Ecker J.R."/>
            <person name="Palm C.J."/>
            <person name="Federspiel N.A."/>
            <person name="Kaul S."/>
            <person name="White O."/>
            <person name="Alonso J."/>
            <person name="Altafi H."/>
            <person name="Araujo R."/>
            <person name="Bowman C.L."/>
            <person name="Brooks S.Y."/>
            <person name="Buehler E."/>
            <person name="Chan A."/>
            <person name="Chao Q."/>
            <person name="Chen H."/>
            <person name="Cheuk R.F."/>
            <person name="Chin C.W."/>
            <person name="Chung M.K."/>
            <person name="Conn L."/>
            <person name="Conway A.B."/>
            <person name="Conway A.R."/>
            <person name="Creasy T.H."/>
            <person name="Dewar K."/>
            <person name="Dunn P."/>
            <person name="Etgu P."/>
            <person name="Feldblyum T.V."/>
            <person name="Feng J.-D."/>
            <person name="Fong B."/>
            <person name="Fujii C.Y."/>
            <person name="Gill J.E."/>
            <person name="Goldsmith A.D."/>
            <person name="Haas B."/>
            <person name="Hansen N.F."/>
            <person name="Hughes B."/>
            <person name="Huizar L."/>
            <person name="Hunter J.L."/>
            <person name="Jenkins J."/>
            <person name="Johnson-Hopson C."/>
            <person name="Khan S."/>
            <person name="Khaykin E."/>
            <person name="Kim C.J."/>
            <person name="Koo H.L."/>
            <person name="Kremenetskaia I."/>
            <person name="Kurtz D.B."/>
            <person name="Kwan A."/>
            <person name="Lam B."/>
            <person name="Langin-Hooper S."/>
            <person name="Lee A."/>
            <person name="Lee J.M."/>
            <person name="Lenz C.A."/>
            <person name="Li J.H."/>
            <person name="Li Y.-P."/>
            <person name="Lin X."/>
            <person name="Liu S.X."/>
            <person name="Liu Z.A."/>
            <person name="Luros J.S."/>
            <person name="Maiti R."/>
            <person name="Marziali A."/>
            <person name="Militscher J."/>
            <person name="Miranda M."/>
            <person name="Nguyen M."/>
            <person name="Nierman W.C."/>
            <person name="Osborne B.I."/>
            <person name="Pai G."/>
            <person name="Peterson J."/>
            <person name="Pham P.K."/>
            <person name="Rizzo M."/>
            <person name="Rooney T."/>
            <person name="Rowley D."/>
            <person name="Sakano H."/>
            <person name="Salzberg S.L."/>
            <person name="Schwartz J.R."/>
            <person name="Shinn P."/>
            <person name="Southwick A.M."/>
            <person name="Sun H."/>
            <person name="Tallon L.J."/>
            <person name="Tambunga G."/>
            <person name="Toriumi M.J."/>
            <person name="Town C.D."/>
            <person name="Utterback T."/>
            <person name="Van Aken S."/>
            <person name="Vaysberg M."/>
            <person name="Vysotskaia V.S."/>
            <person name="Walker M."/>
            <person name="Wu D."/>
            <person name="Yu G."/>
            <person name="Fraser C.M."/>
            <person name="Venter J.C."/>
            <person name="Davis R.W."/>
        </authorList>
    </citation>
    <scope>NUCLEOTIDE SEQUENCE [LARGE SCALE GENOMIC DNA]</scope>
    <source>
        <strain>cv. Columbia</strain>
    </source>
</reference>
<reference key="2">
    <citation type="journal article" date="2017" name="Plant J.">
        <title>Araport11: a complete reannotation of the Arabidopsis thaliana reference genome.</title>
        <authorList>
            <person name="Cheng C.Y."/>
            <person name="Krishnakumar V."/>
            <person name="Chan A.P."/>
            <person name="Thibaud-Nissen F."/>
            <person name="Schobel S."/>
            <person name="Town C.D."/>
        </authorList>
    </citation>
    <scope>GENOME REANNOTATION</scope>
    <source>
        <strain>cv. Columbia</strain>
    </source>
</reference>
<reference key="3">
    <citation type="submission" date="2005-09" db="EMBL/GenBank/DDBJ databases">
        <title>Large-scale analysis of RIKEN Arabidopsis full-length (RAFL) cDNAs.</title>
        <authorList>
            <person name="Totoki Y."/>
            <person name="Seki M."/>
            <person name="Ishida J."/>
            <person name="Nakajima M."/>
            <person name="Enju A."/>
            <person name="Kamiya A."/>
            <person name="Narusaka M."/>
            <person name="Shin-i T."/>
            <person name="Nakagawa M."/>
            <person name="Sakamoto N."/>
            <person name="Oishi K."/>
            <person name="Kohara Y."/>
            <person name="Kobayashi M."/>
            <person name="Toyoda A."/>
            <person name="Sakaki Y."/>
            <person name="Sakurai T."/>
            <person name="Iida K."/>
            <person name="Akiyama K."/>
            <person name="Satou M."/>
            <person name="Toyoda T."/>
            <person name="Konagaya A."/>
            <person name="Carninci P."/>
            <person name="Kawai J."/>
            <person name="Hayashizaki Y."/>
            <person name="Shinozaki K."/>
        </authorList>
    </citation>
    <scope>NUCLEOTIDE SEQUENCE [LARGE SCALE MRNA]</scope>
    <source>
        <strain>cv. Columbia</strain>
    </source>
</reference>
<reference key="4">
    <citation type="submission" date="2006-05" db="EMBL/GenBank/DDBJ databases">
        <title>Arabidopsis ORF clones.</title>
        <authorList>
            <person name="Quinitio C."/>
            <person name="Chen H."/>
            <person name="Kim C.J."/>
            <person name="Shinn P."/>
            <person name="Ecker J.R."/>
        </authorList>
    </citation>
    <scope>NUCLEOTIDE SEQUENCE [LARGE SCALE MRNA]</scope>
    <source>
        <strain>cv. Columbia</strain>
    </source>
</reference>
<reference key="5">
    <citation type="submission" date="2002-03" db="EMBL/GenBank/DDBJ databases">
        <title>Full-length cDNA from Arabidopsis thaliana.</title>
        <authorList>
            <person name="Brover V.V."/>
            <person name="Troukhan M.E."/>
            <person name="Alexandrov N.A."/>
            <person name="Lu Y.-P."/>
            <person name="Flavell R.B."/>
            <person name="Feldmann K.A."/>
        </authorList>
    </citation>
    <scope>NUCLEOTIDE SEQUENCE [LARGE SCALE MRNA]</scope>
</reference>
<reference key="6">
    <citation type="journal article" date="2003" name="Plant Physiol.">
        <title>EARLY FLOWERING 4 functions in phytochrome B-regulated seedling de-etiolation.</title>
        <authorList>
            <person name="Khanna R."/>
            <person name="Kikis E.A."/>
            <person name="Quail P.H."/>
        </authorList>
    </citation>
    <scope>GENE FAMILY</scope>
</reference>
<reference key="7">
    <citation type="journal article" date="2009" name="HFSP J.">
        <title>Integrating ELF4 into the circadian system through combined structural and functional studies.</title>
        <authorList>
            <person name="Kolmos E."/>
            <person name="Nowak M."/>
            <person name="Werner M."/>
            <person name="Fischer K."/>
            <person name="Schwarz G."/>
            <person name="Mathews S."/>
            <person name="Schoof H."/>
            <person name="Nagy F."/>
            <person name="Bujnicki J.M."/>
            <person name="Davis S.J."/>
        </authorList>
    </citation>
    <scope>INDUCTION BY LIGHT</scope>
    <scope>GENE FAMILY</scope>
    <scope>NOMENCLATURE</scope>
</reference>